<organism>
    <name type="scientific">Nocardioides sp. (strain ATCC BAA-499 / JS614)</name>
    <dbReference type="NCBI Taxonomy" id="196162"/>
    <lineage>
        <taxon>Bacteria</taxon>
        <taxon>Bacillati</taxon>
        <taxon>Actinomycetota</taxon>
        <taxon>Actinomycetes</taxon>
        <taxon>Propionibacteriales</taxon>
        <taxon>Nocardioidaceae</taxon>
        <taxon>Nocardioides</taxon>
    </lineage>
</organism>
<feature type="chain" id="PRO_1000139282" description="Cyclic pyranopterin monophosphate synthase">
    <location>
        <begin position="1"/>
        <end position="163"/>
    </location>
</feature>
<feature type="active site" evidence="1">
    <location>
        <position position="133"/>
    </location>
</feature>
<feature type="binding site" evidence="1">
    <location>
        <begin position="79"/>
        <end position="81"/>
    </location>
    <ligand>
        <name>substrate</name>
    </ligand>
</feature>
<feature type="binding site" evidence="1">
    <location>
        <begin position="118"/>
        <end position="119"/>
    </location>
    <ligand>
        <name>substrate</name>
    </ligand>
</feature>
<evidence type="ECO:0000255" key="1">
    <source>
        <dbReference type="HAMAP-Rule" id="MF_01224"/>
    </source>
</evidence>
<accession>A1SET2</accession>
<name>MOAC_NOCSJ</name>
<gene>
    <name evidence="1" type="primary">moaC</name>
    <name type="ordered locus">Noca_0792</name>
</gene>
<comment type="function">
    <text evidence="1">Catalyzes the conversion of (8S)-3',8-cyclo-7,8-dihydroguanosine 5'-triphosphate to cyclic pyranopterin monophosphate (cPMP).</text>
</comment>
<comment type="catalytic activity">
    <reaction evidence="1">
        <text>(8S)-3',8-cyclo-7,8-dihydroguanosine 5'-triphosphate = cyclic pyranopterin phosphate + diphosphate</text>
        <dbReference type="Rhea" id="RHEA:49580"/>
        <dbReference type="ChEBI" id="CHEBI:33019"/>
        <dbReference type="ChEBI" id="CHEBI:59648"/>
        <dbReference type="ChEBI" id="CHEBI:131766"/>
        <dbReference type="EC" id="4.6.1.17"/>
    </reaction>
</comment>
<comment type="pathway">
    <text evidence="1">Cofactor biosynthesis; molybdopterin biosynthesis.</text>
</comment>
<comment type="subunit">
    <text evidence="1">Homohexamer; trimer of dimers.</text>
</comment>
<comment type="similarity">
    <text evidence="1">Belongs to the MoaC family.</text>
</comment>
<proteinExistence type="inferred from homology"/>
<sequence>MSDSPRRLTHVDESGAARMVDVSGKDVTARTATASGRVLVSETVVGLLRGEGVPKGDALGVARVAGIMAAKQTPTLIPLCHPLSISGVSVDLEVTDDPEPSVAIRATVKTTDRTGVEMEALTAVSVAALTVVDMVKAVDKAAVVTDIRVETKTGGKSGDWSRP</sequence>
<dbReference type="EC" id="4.6.1.17" evidence="1"/>
<dbReference type="EMBL" id="CP000509">
    <property type="protein sequence ID" value="ABL80317.1"/>
    <property type="molecule type" value="Genomic_DNA"/>
</dbReference>
<dbReference type="RefSeq" id="WP_011754266.1">
    <property type="nucleotide sequence ID" value="NC_008699.1"/>
</dbReference>
<dbReference type="SMR" id="A1SET2"/>
<dbReference type="STRING" id="196162.Noca_0792"/>
<dbReference type="KEGG" id="nca:Noca_0792"/>
<dbReference type="eggNOG" id="COG0315">
    <property type="taxonomic scope" value="Bacteria"/>
</dbReference>
<dbReference type="HOGENOM" id="CLU_074693_1_1_11"/>
<dbReference type="OrthoDB" id="9794429at2"/>
<dbReference type="UniPathway" id="UPA00344"/>
<dbReference type="Proteomes" id="UP000000640">
    <property type="component" value="Chromosome"/>
</dbReference>
<dbReference type="GO" id="GO:0061799">
    <property type="term" value="F:cyclic pyranopterin monophosphate synthase activity"/>
    <property type="evidence" value="ECO:0007669"/>
    <property type="project" value="UniProtKB-UniRule"/>
</dbReference>
<dbReference type="GO" id="GO:0006777">
    <property type="term" value="P:Mo-molybdopterin cofactor biosynthetic process"/>
    <property type="evidence" value="ECO:0007669"/>
    <property type="project" value="UniProtKB-UniRule"/>
</dbReference>
<dbReference type="CDD" id="cd01420">
    <property type="entry name" value="MoaC_PE"/>
    <property type="match status" value="1"/>
</dbReference>
<dbReference type="Gene3D" id="3.30.70.640">
    <property type="entry name" value="Molybdopterin cofactor biosynthesis C (MoaC) domain"/>
    <property type="match status" value="1"/>
</dbReference>
<dbReference type="HAMAP" id="MF_01224_B">
    <property type="entry name" value="MoaC_B"/>
    <property type="match status" value="1"/>
</dbReference>
<dbReference type="InterPro" id="IPR023045">
    <property type="entry name" value="MoaC"/>
</dbReference>
<dbReference type="InterPro" id="IPR047594">
    <property type="entry name" value="MoaC_bact/euk"/>
</dbReference>
<dbReference type="InterPro" id="IPR036522">
    <property type="entry name" value="MoaC_sf"/>
</dbReference>
<dbReference type="InterPro" id="IPR050105">
    <property type="entry name" value="MoCo_biosynth_MoaA/MoaC"/>
</dbReference>
<dbReference type="InterPro" id="IPR002820">
    <property type="entry name" value="Mopterin_CF_biosynth-C_dom"/>
</dbReference>
<dbReference type="NCBIfam" id="TIGR00581">
    <property type="entry name" value="moaC"/>
    <property type="match status" value="1"/>
</dbReference>
<dbReference type="NCBIfam" id="NF006870">
    <property type="entry name" value="PRK09364.1"/>
    <property type="match status" value="1"/>
</dbReference>
<dbReference type="PANTHER" id="PTHR22960:SF29">
    <property type="entry name" value="CYCLIC PYRANOPTERIN MONOPHOSPHATE SYNTHASE"/>
    <property type="match status" value="1"/>
</dbReference>
<dbReference type="PANTHER" id="PTHR22960">
    <property type="entry name" value="MOLYBDOPTERIN COFACTOR SYNTHESIS PROTEIN A"/>
    <property type="match status" value="1"/>
</dbReference>
<dbReference type="Pfam" id="PF01967">
    <property type="entry name" value="MoaC"/>
    <property type="match status" value="1"/>
</dbReference>
<dbReference type="SUPFAM" id="SSF55040">
    <property type="entry name" value="Molybdenum cofactor biosynthesis protein C, MoaC"/>
    <property type="match status" value="1"/>
</dbReference>
<protein>
    <recommendedName>
        <fullName evidence="1">Cyclic pyranopterin monophosphate synthase</fullName>
        <ecNumber evidence="1">4.6.1.17</ecNumber>
    </recommendedName>
    <alternativeName>
        <fullName evidence="1">Molybdenum cofactor biosynthesis protein C</fullName>
    </alternativeName>
</protein>
<keyword id="KW-0456">Lyase</keyword>
<keyword id="KW-0501">Molybdenum cofactor biosynthesis</keyword>
<keyword id="KW-1185">Reference proteome</keyword>
<reference key="1">
    <citation type="submission" date="2006-12" db="EMBL/GenBank/DDBJ databases">
        <title>Complete sequence of chromosome 1 of Nocardioides sp. JS614.</title>
        <authorList>
            <person name="Copeland A."/>
            <person name="Lucas S."/>
            <person name="Lapidus A."/>
            <person name="Barry K."/>
            <person name="Detter J.C."/>
            <person name="Glavina del Rio T."/>
            <person name="Hammon N."/>
            <person name="Israni S."/>
            <person name="Dalin E."/>
            <person name="Tice H."/>
            <person name="Pitluck S."/>
            <person name="Thompson L.S."/>
            <person name="Brettin T."/>
            <person name="Bruce D."/>
            <person name="Han C."/>
            <person name="Tapia R."/>
            <person name="Schmutz J."/>
            <person name="Larimer F."/>
            <person name="Land M."/>
            <person name="Hauser L."/>
            <person name="Kyrpides N."/>
            <person name="Kim E."/>
            <person name="Mattes T."/>
            <person name="Gossett J."/>
            <person name="Richardson P."/>
        </authorList>
    </citation>
    <scope>NUCLEOTIDE SEQUENCE [LARGE SCALE GENOMIC DNA]</scope>
    <source>
        <strain>ATCC BAA-499 / JS614</strain>
    </source>
</reference>